<sequence>MAELIIVDFQNISIFILLCLFSFLCYALFFKKPKGFDLPPSPPSLPIIGHLHHLLSSSLPHKSFQKLSFKYGPLLHLRIFNFPMVLVSSASMAYEVFRTNDVNVSYRFVPVNKDSLVFGSSGFVTAPYGDYWKFMKKLISTKLLRPHALELSKGNRAEELRRFCLDLQGKARKKESVEIGKVALKLTNNIICRMSMGRSCSEKNGVAERARELVNKSFALSVKLFFSNMFRKDIMGVSREFDEFLERILVEHEENLEGDQDRDMIDHLLEAYRNEEAEYKITRKQIKSLIVEIFLGGTDSSAQTIQWTMAEILNNPGVLEKLRAEIDSVVGGKRLIQESDLPNLPYLQAVVKEGLRLHPSAPVLLRVFGESCEVKEFYVPEKTTLVVNLYAVNRDPDSWEDPDMFKPERFLVSSISGDEEKIREQAVKYVTFGGGRRTCPAVKLAHIFMETAIGAMVQCFDWRIKGEKVYMEEAVSGLSLKMAHPLKCTPVVRFDPFSF</sequence>
<protein>
    <recommendedName>
        <fullName evidence="3">Cytochrome P450 705A12</fullName>
        <ecNumber evidence="4">1.14.-.-</ecNumber>
    </recommendedName>
</protein>
<feature type="chain" id="PRO_0000444435" description="Cytochrome P450 705A12">
    <location>
        <begin position="1"/>
        <end position="499"/>
    </location>
</feature>
<feature type="transmembrane region" description="Helical" evidence="2">
    <location>
        <begin position="4"/>
        <end position="24"/>
    </location>
</feature>
<feature type="binding site" description="axial binding residue" evidence="1">
    <location>
        <position position="439"/>
    </location>
    <ligand>
        <name>heme</name>
        <dbReference type="ChEBI" id="CHEBI:30413"/>
    </ligand>
    <ligandPart>
        <name>Fe</name>
        <dbReference type="ChEBI" id="CHEBI:18248"/>
    </ligandPart>
</feature>
<evidence type="ECO:0000250" key="1">
    <source>
        <dbReference type="UniProtKB" id="P04798"/>
    </source>
</evidence>
<evidence type="ECO:0000255" key="2"/>
<evidence type="ECO:0000303" key="3">
    <source>
    </source>
</evidence>
<evidence type="ECO:0000305" key="4"/>
<evidence type="ECO:0000305" key="5">
    <source>
    </source>
</evidence>
<evidence type="ECO:0000312" key="6">
    <source>
        <dbReference type="Araport" id="AT5G42580"/>
    </source>
</evidence>
<evidence type="ECO:0000312" key="7">
    <source>
        <dbReference type="EMBL" id="BAB09329.1"/>
    </source>
</evidence>
<comment type="function">
    <text evidence="5">May be involved in hydroxylation of the triterpene marneral.</text>
</comment>
<comment type="cofactor">
    <cofactor evidence="1">
        <name>heme</name>
        <dbReference type="ChEBI" id="CHEBI:30413"/>
    </cofactor>
</comment>
<comment type="subcellular location">
    <subcellularLocation>
        <location evidence="2">Membrane</location>
        <topology evidence="2">Single-pass membrane protein</topology>
    </subcellularLocation>
</comment>
<comment type="similarity">
    <text evidence="4">Belongs to the cytochrome P450 family.</text>
</comment>
<reference key="1">
    <citation type="journal article" date="2000" name="DNA Res.">
        <title>Structural analysis of Arabidopsis thaliana chromosome 5. X. Sequence features of the regions of 3,076,755 bp covered by sixty P1 and TAC clones.</title>
        <authorList>
            <person name="Sato S."/>
            <person name="Nakamura Y."/>
            <person name="Kaneko T."/>
            <person name="Katoh T."/>
            <person name="Asamizu E."/>
            <person name="Kotani H."/>
            <person name="Tabata S."/>
        </authorList>
    </citation>
    <scope>NUCLEOTIDE SEQUENCE [LARGE SCALE GENOMIC DNA]</scope>
    <source>
        <strain>cv. Columbia</strain>
    </source>
</reference>
<reference key="2">
    <citation type="journal article" date="2017" name="Plant J.">
        <title>Araport11: a complete reannotation of the Arabidopsis thaliana reference genome.</title>
        <authorList>
            <person name="Cheng C.Y."/>
            <person name="Krishnakumar V."/>
            <person name="Chan A.P."/>
            <person name="Thibaud-Nissen F."/>
            <person name="Schobel S."/>
            <person name="Town C.D."/>
        </authorList>
    </citation>
    <scope>GENOME REANNOTATION</scope>
    <source>
        <strain>cv. Columbia</strain>
    </source>
</reference>
<reference key="3">
    <citation type="journal article" date="2011" name="Proc. Natl. Acad. Sci. U.S.A.">
        <title>Formation of plant metabolic gene clusters within dynamic chromosomal regions.</title>
        <authorList>
            <person name="Field B."/>
            <person name="Fiston-Lavier A.S."/>
            <person name="Kemen A."/>
            <person name="Geisler K."/>
            <person name="Quesneville H."/>
            <person name="Osbourn A.E."/>
        </authorList>
    </citation>
    <scope>FUNCTION</scope>
</reference>
<accession>Q9FH67</accession>
<name>C705C_ARATH</name>
<organism>
    <name type="scientific">Arabidopsis thaliana</name>
    <name type="common">Mouse-ear cress</name>
    <dbReference type="NCBI Taxonomy" id="3702"/>
    <lineage>
        <taxon>Eukaryota</taxon>
        <taxon>Viridiplantae</taxon>
        <taxon>Streptophyta</taxon>
        <taxon>Embryophyta</taxon>
        <taxon>Tracheophyta</taxon>
        <taxon>Spermatophyta</taxon>
        <taxon>Magnoliopsida</taxon>
        <taxon>eudicotyledons</taxon>
        <taxon>Gunneridae</taxon>
        <taxon>Pentapetalae</taxon>
        <taxon>rosids</taxon>
        <taxon>malvids</taxon>
        <taxon>Brassicales</taxon>
        <taxon>Brassicaceae</taxon>
        <taxon>Camelineae</taxon>
        <taxon>Arabidopsis</taxon>
    </lineage>
</organism>
<gene>
    <name evidence="3" type="primary">CYP705A12</name>
    <name evidence="6" type="ordered locus">At5g42580</name>
    <name evidence="7" type="ORF">K16E1.5</name>
</gene>
<dbReference type="EC" id="1.14.-.-" evidence="4"/>
<dbReference type="EMBL" id="AB022210">
    <property type="protein sequence ID" value="BAB09329.1"/>
    <property type="molecule type" value="Genomic_DNA"/>
</dbReference>
<dbReference type="EMBL" id="CP002688">
    <property type="protein sequence ID" value="AED94831.1"/>
    <property type="molecule type" value="Genomic_DNA"/>
</dbReference>
<dbReference type="RefSeq" id="NP_199072.1">
    <property type="nucleotide sequence ID" value="NM_123622.2"/>
</dbReference>
<dbReference type="SMR" id="Q9FH67"/>
<dbReference type="FunCoup" id="Q9FH67">
    <property type="interactions" value="208"/>
</dbReference>
<dbReference type="STRING" id="3702.Q9FH67"/>
<dbReference type="PaxDb" id="3702-AT5G42580.1"/>
<dbReference type="ProteomicsDB" id="240562"/>
<dbReference type="EnsemblPlants" id="AT5G42580.1">
    <property type="protein sequence ID" value="AT5G42580.1"/>
    <property type="gene ID" value="AT5G42580"/>
</dbReference>
<dbReference type="GeneID" id="834265"/>
<dbReference type="Gramene" id="AT5G42580.1">
    <property type="protein sequence ID" value="AT5G42580.1"/>
    <property type="gene ID" value="AT5G42580"/>
</dbReference>
<dbReference type="KEGG" id="ath:AT5G42580"/>
<dbReference type="Araport" id="AT5G42580"/>
<dbReference type="TAIR" id="AT5G42580">
    <property type="gene designation" value="CYP705A12"/>
</dbReference>
<dbReference type="eggNOG" id="KOG0156">
    <property type="taxonomic scope" value="Eukaryota"/>
</dbReference>
<dbReference type="HOGENOM" id="CLU_001570_4_0_1"/>
<dbReference type="InParanoid" id="Q9FH67"/>
<dbReference type="OMA" id="KEVYAGM"/>
<dbReference type="OrthoDB" id="1103324at2759"/>
<dbReference type="PhylomeDB" id="Q9FH67"/>
<dbReference type="BioCyc" id="ARA:AT5G42580-MONOMER"/>
<dbReference type="PRO" id="PR:Q9FH67"/>
<dbReference type="Proteomes" id="UP000006548">
    <property type="component" value="Chromosome 5"/>
</dbReference>
<dbReference type="ExpressionAtlas" id="Q9FH67">
    <property type="expression patterns" value="baseline and differential"/>
</dbReference>
<dbReference type="GO" id="GO:0016020">
    <property type="term" value="C:membrane"/>
    <property type="evidence" value="ECO:0007669"/>
    <property type="project" value="UniProtKB-SubCell"/>
</dbReference>
<dbReference type="GO" id="GO:0009506">
    <property type="term" value="C:plasmodesma"/>
    <property type="evidence" value="ECO:0007005"/>
    <property type="project" value="TAIR"/>
</dbReference>
<dbReference type="GO" id="GO:0020037">
    <property type="term" value="F:heme binding"/>
    <property type="evidence" value="ECO:0007669"/>
    <property type="project" value="InterPro"/>
</dbReference>
<dbReference type="GO" id="GO:0005506">
    <property type="term" value="F:iron ion binding"/>
    <property type="evidence" value="ECO:0007669"/>
    <property type="project" value="InterPro"/>
</dbReference>
<dbReference type="GO" id="GO:0004497">
    <property type="term" value="F:monooxygenase activity"/>
    <property type="evidence" value="ECO:0007669"/>
    <property type="project" value="UniProtKB-KW"/>
</dbReference>
<dbReference type="GO" id="GO:0016705">
    <property type="term" value="F:oxidoreductase activity, acting on paired donors, with incorporation or reduction of molecular oxygen"/>
    <property type="evidence" value="ECO:0007669"/>
    <property type="project" value="InterPro"/>
</dbReference>
<dbReference type="CDD" id="cd20655">
    <property type="entry name" value="CYP93"/>
    <property type="match status" value="1"/>
</dbReference>
<dbReference type="FunFam" id="1.10.630.10:FF:000019">
    <property type="entry name" value="Cytochrome P450 family protein"/>
    <property type="match status" value="1"/>
</dbReference>
<dbReference type="Gene3D" id="1.10.630.10">
    <property type="entry name" value="Cytochrome P450"/>
    <property type="match status" value="1"/>
</dbReference>
<dbReference type="InterPro" id="IPR001128">
    <property type="entry name" value="Cyt_P450"/>
</dbReference>
<dbReference type="InterPro" id="IPR017972">
    <property type="entry name" value="Cyt_P450_CS"/>
</dbReference>
<dbReference type="InterPro" id="IPR002401">
    <property type="entry name" value="Cyt_P450_E_grp-I"/>
</dbReference>
<dbReference type="InterPro" id="IPR036396">
    <property type="entry name" value="Cyt_P450_sf"/>
</dbReference>
<dbReference type="InterPro" id="IPR051103">
    <property type="entry name" value="Plant_metabolite_P450s"/>
</dbReference>
<dbReference type="PANTHER" id="PTHR24298:SF630">
    <property type="entry name" value="CYTOCHROME P450 705A1-RELATED"/>
    <property type="match status" value="1"/>
</dbReference>
<dbReference type="PANTHER" id="PTHR24298">
    <property type="entry name" value="FLAVONOID 3'-MONOOXYGENASE-RELATED"/>
    <property type="match status" value="1"/>
</dbReference>
<dbReference type="Pfam" id="PF00067">
    <property type="entry name" value="p450"/>
    <property type="match status" value="1"/>
</dbReference>
<dbReference type="PRINTS" id="PR00463">
    <property type="entry name" value="EP450I"/>
</dbReference>
<dbReference type="PRINTS" id="PR00385">
    <property type="entry name" value="P450"/>
</dbReference>
<dbReference type="SUPFAM" id="SSF48264">
    <property type="entry name" value="Cytochrome P450"/>
    <property type="match status" value="1"/>
</dbReference>
<dbReference type="PROSITE" id="PS00086">
    <property type="entry name" value="CYTOCHROME_P450"/>
    <property type="match status" value="1"/>
</dbReference>
<proteinExistence type="inferred from homology"/>
<keyword id="KW-0349">Heme</keyword>
<keyword id="KW-0408">Iron</keyword>
<keyword id="KW-0472">Membrane</keyword>
<keyword id="KW-0479">Metal-binding</keyword>
<keyword id="KW-0503">Monooxygenase</keyword>
<keyword id="KW-0560">Oxidoreductase</keyword>
<keyword id="KW-1185">Reference proteome</keyword>
<keyword id="KW-0812">Transmembrane</keyword>
<keyword id="KW-1133">Transmembrane helix</keyword>